<name>POLG_HPE2W</name>
<reference key="1">
    <citation type="journal article" date="1998" name="J. Gen. Virol.">
        <title>Molecular analysis of human parechovirus type 2 (formerly echovirus 23).</title>
        <authorList>
            <person name="Ghazi F."/>
            <person name="Hughes P.J."/>
            <person name="Hyypiae T."/>
            <person name="Stanway G."/>
        </authorList>
    </citation>
    <scope>NUCLEOTIDE SEQUENCE [GENOMIC RNA]</scope>
</reference>
<reference key="2">
    <citation type="journal article" date="2021" name="Open Biol.">
        <title>A comparative analysis of parechovirus protein structures with other picornaviruses.</title>
        <authorList>
            <person name="Domanska A."/>
            <person name="Guryanov S."/>
            <person name="Butcher S.J."/>
        </authorList>
    </citation>
    <scope>REVIEW</scope>
</reference>
<keyword id="KW-0067">ATP-binding</keyword>
<keyword id="KW-0167">Capsid protein</keyword>
<keyword id="KW-0191">Covalent protein-RNA linkage</keyword>
<keyword id="KW-0347">Helicase</keyword>
<keyword id="KW-1035">Host cytoplasm</keyword>
<keyword id="KW-1036">Host cytoplasmic vesicle</keyword>
<keyword id="KW-1043">Host membrane</keyword>
<keyword id="KW-1048">Host nucleus</keyword>
<keyword id="KW-0945">Host-virus interaction</keyword>
<keyword id="KW-0378">Hydrolase</keyword>
<keyword id="KW-0407">Ion channel</keyword>
<keyword id="KW-0406">Ion transport</keyword>
<keyword id="KW-0449">Lipoprotein</keyword>
<keyword id="KW-0460">Magnesium</keyword>
<keyword id="KW-0472">Membrane</keyword>
<keyword id="KW-0479">Metal-binding</keyword>
<keyword id="KW-0519">Myristate</keyword>
<keyword id="KW-0547">Nucleotide-binding</keyword>
<keyword id="KW-0548">Nucleotidyltransferase</keyword>
<keyword id="KW-0597">Phosphoprotein</keyword>
<keyword id="KW-0645">Protease</keyword>
<keyword id="KW-1185">Reference proteome</keyword>
<keyword id="KW-0694">RNA-binding</keyword>
<keyword id="KW-0696">RNA-directed RNA polymerase</keyword>
<keyword id="KW-1143">T=pseudo3 icosahedral capsid protein</keyword>
<keyword id="KW-0788">Thiol protease</keyword>
<keyword id="KW-0808">Transferase</keyword>
<keyword id="KW-0813">Transport</keyword>
<keyword id="KW-1161">Viral attachment to host cell</keyword>
<keyword id="KW-1182">Viral ion channel</keyword>
<keyword id="KW-0693">Viral RNA replication</keyword>
<keyword id="KW-0946">Virion</keyword>
<keyword id="KW-1160">Virus entry into host cell</keyword>
<proteinExistence type="inferred from homology"/>
<protein>
    <recommendedName>
        <fullName>Genome polyprotein</fullName>
    </recommendedName>
    <component>
        <recommendedName>
            <fullName>Capsid protein VP0</fullName>
        </recommendedName>
        <alternativeName>
            <fullName>P1AB</fullName>
        </alternativeName>
        <alternativeName>
            <fullName>Virion protein 0</fullName>
        </alternativeName>
    </component>
    <component>
        <recommendedName>
            <fullName>Capsid protein VP3</fullName>
        </recommendedName>
        <alternativeName>
            <fullName>P1C</fullName>
        </alternativeName>
        <alternativeName>
            <fullName>Virion protein 3</fullName>
        </alternativeName>
    </component>
    <component>
        <recommendedName>
            <fullName>Capsid protein VP1</fullName>
        </recommendedName>
        <alternativeName>
            <fullName>P1D</fullName>
        </alternativeName>
        <alternativeName>
            <fullName>Virion protein 1</fullName>
        </alternativeName>
    </component>
    <component>
        <recommendedName>
            <fullName evidence="14">Protein 2A H-NC</fullName>
            <shortName>P2A</shortName>
        </recommendedName>
        <alternativeName>
            <fullName>Protein 2A</fullName>
        </alternativeName>
    </component>
    <component>
        <recommendedName>
            <fullName>Protein 2B</fullName>
            <shortName>P2B</shortName>
        </recommendedName>
    </component>
    <component>
        <recommendedName>
            <fullName>Protein 2C</fullName>
            <shortName>P2C</shortName>
            <ecNumber evidence="2">3.6.1.15</ecNumber>
        </recommendedName>
    </component>
    <component>
        <recommendedName>
            <fullName>Protein 3A</fullName>
            <shortName>P3A</shortName>
        </recommendedName>
    </component>
    <component>
        <recommendedName>
            <fullName>Viral protein genome-linked</fullName>
            <shortName>VPg</shortName>
        </recommendedName>
        <alternativeName>
            <fullName>Protein 3B</fullName>
            <shortName>P3B</shortName>
        </alternativeName>
    </component>
    <component>
        <recommendedName>
            <fullName evidence="12">Protease 3C</fullName>
            <shortName evidence="12">P3C</shortName>
            <ecNumber evidence="12">3.4.22.28</ecNumber>
        </recommendedName>
        <alternativeName>
            <fullName>Picornain 3C</fullName>
        </alternativeName>
    </component>
    <component>
        <recommendedName>
            <fullName>RNA-directed RNA polymerase 3D-POL</fullName>
            <shortName>P3D-POL</shortName>
            <ecNumber evidence="10">2.7.7.48</ecNumber>
        </recommendedName>
    </component>
</protein>
<feature type="chain" id="PRO_0000039750" description="Capsid protein VP0" evidence="9">
    <location>
        <begin position="1"/>
        <end position="289"/>
    </location>
</feature>
<feature type="chain" id="PRO_0000039751" description="Capsid protein VP3" evidence="9">
    <location>
        <begin position="290"/>
        <end position="542"/>
    </location>
</feature>
<feature type="chain" id="PRO_0000039752" description="Capsid protein VP1" evidence="9">
    <location>
        <begin position="543"/>
        <end position="775"/>
    </location>
</feature>
<feature type="chain" id="PRO_0000039753" description="Protein 2A H-NC" evidence="9">
    <location>
        <begin position="776"/>
        <end position="922"/>
    </location>
</feature>
<feature type="chain" id="PRO_0000039754" description="Protein 2B" evidence="9">
    <location>
        <begin position="923"/>
        <end position="1044"/>
    </location>
</feature>
<feature type="chain" id="PRO_0000039755" description="Protein 2C" evidence="9">
    <location>
        <begin position="1045"/>
        <end position="1373"/>
    </location>
</feature>
<feature type="chain" id="PRO_0000039756" description="Protein 3A" evidence="9">
    <location>
        <begin position="1374"/>
        <end position="1490"/>
    </location>
</feature>
<feature type="chain" id="PRO_0000039757" description="Viral protein genome-linked" evidence="9">
    <location>
        <begin position="1491"/>
        <end position="1510"/>
    </location>
</feature>
<feature type="chain" id="PRO_0000039758" description="Protease 3C" evidence="9">
    <location>
        <begin position="1511"/>
        <end position="1710"/>
    </location>
</feature>
<feature type="chain" id="PRO_0000039759" description="RNA-directed RNA polymerase 3D-POL" evidence="9">
    <location>
        <begin position="1711"/>
        <end position="2179"/>
    </location>
</feature>
<feature type="domain" description="LRAT" evidence="13">
    <location>
        <begin position="786"/>
        <end position="881"/>
    </location>
</feature>
<feature type="domain" description="SF3 helicase" evidence="11">
    <location>
        <begin position="1156"/>
        <end position="1317"/>
    </location>
</feature>
<feature type="domain" description="Peptidase C3" evidence="12">
    <location>
        <begin position="1517"/>
        <end position="1707"/>
    </location>
</feature>
<feature type="domain" description="RdRp catalytic" evidence="10">
    <location>
        <begin position="1944"/>
        <end position="2058"/>
    </location>
</feature>
<feature type="short sequence motif" description="Cell attachment site" evidence="9">
    <location>
        <begin position="763"/>
        <end position="765"/>
    </location>
</feature>
<feature type="active site" description="For protein 2A H-NC" evidence="5">
    <location>
        <position position="796"/>
    </location>
</feature>
<feature type="active site" description="For protein 2A H-NC; Acyl-thioester intermediate" evidence="5">
    <location>
        <position position="865"/>
    </location>
</feature>
<feature type="active site" description="For protease 3C activity" evidence="12">
    <location>
        <position position="1557"/>
    </location>
</feature>
<feature type="active site" description="For protease 3C activity" evidence="12">
    <location>
        <position position="1595"/>
    </location>
</feature>
<feature type="active site" description="For protease 3C activity" evidence="12">
    <location>
        <position position="1669"/>
    </location>
</feature>
<feature type="active site" description="Acyl-thioester intermediate" evidence="13">
    <location>
        <position position="1896"/>
    </location>
</feature>
<feature type="binding site" evidence="11">
    <location>
        <begin position="1184"/>
        <end position="1191"/>
    </location>
    <ligand>
        <name>ATP</name>
        <dbReference type="ChEBI" id="CHEBI:30616"/>
    </ligand>
</feature>
<feature type="binding site" evidence="2">
    <location>
        <position position="1950"/>
    </location>
    <ligand>
        <name>Mg(2+)</name>
        <dbReference type="ChEBI" id="CHEBI:18420"/>
        <label>1</label>
        <note>catalytic; for RdRp activity</note>
    </ligand>
</feature>
<feature type="binding site" evidence="2">
    <location>
        <position position="1950"/>
    </location>
    <ligand>
        <name>Mg(2+)</name>
        <dbReference type="ChEBI" id="CHEBI:18420"/>
        <label>2</label>
        <note>catalytic; for RdRp activity</note>
    </ligand>
</feature>
<feature type="binding site" evidence="2">
    <location>
        <position position="2044"/>
    </location>
    <ligand>
        <name>Mg(2+)</name>
        <dbReference type="ChEBI" id="CHEBI:18420"/>
        <label>1</label>
        <note>catalytic; for RdRp activity</note>
    </ligand>
</feature>
<feature type="binding site" evidence="2">
    <location>
        <position position="2044"/>
    </location>
    <ligand>
        <name>Mg(2+)</name>
        <dbReference type="ChEBI" id="CHEBI:18420"/>
        <label>2</label>
        <note>catalytic; for RdRp activity</note>
    </ligand>
</feature>
<feature type="site" description="Cleavage; by protease 3C" evidence="6">
    <location>
        <begin position="289"/>
        <end position="290"/>
    </location>
</feature>
<feature type="site" description="Cleavage; by protease 3C" evidence="6">
    <location>
        <begin position="542"/>
        <end position="543"/>
    </location>
</feature>
<feature type="site" description="Cleavage; by protease 3C" evidence="6">
    <location>
        <begin position="772"/>
        <end position="773"/>
    </location>
</feature>
<feature type="site" description="Cleavage; by protease 3C" evidence="6">
    <location>
        <begin position="922"/>
        <end position="923"/>
    </location>
</feature>
<feature type="site" description="Cleavage; by protease 3C" evidence="6">
    <location>
        <begin position="1044"/>
        <end position="1045"/>
    </location>
</feature>
<feature type="site" description="Cleavage; by protease 3C" evidence="6">
    <location>
        <begin position="1373"/>
        <end position="1374"/>
    </location>
</feature>
<feature type="site" description="Cleavage; by protease 3C" evidence="6">
    <location>
        <begin position="1490"/>
        <end position="1491"/>
    </location>
</feature>
<feature type="site" description="Cleavage; by protease 3C" evidence="6">
    <location>
        <begin position="1516"/>
        <end position="1517"/>
    </location>
</feature>
<feature type="site" description="Cleavage; by protease 3C" evidence="6">
    <location>
        <begin position="1710"/>
        <end position="1711"/>
    </location>
</feature>
<feature type="modified residue" description="O-(5'-phospho-RNA)-tyrosine" evidence="2">
    <location>
        <position position="1493"/>
    </location>
</feature>
<dbReference type="EC" id="3.6.1.15" evidence="2"/>
<dbReference type="EC" id="3.4.22.28" evidence="12"/>
<dbReference type="EC" id="2.7.7.48" evidence="10"/>
<dbReference type="EMBL" id="AJ005695">
    <property type="protein sequence ID" value="CAA06679.1"/>
    <property type="molecule type" value="Genomic_RNA"/>
</dbReference>
<dbReference type="SMR" id="O73556"/>
<dbReference type="IntAct" id="O73556">
    <property type="interactions" value="1"/>
</dbReference>
<dbReference type="KEGG" id="vg:1403455"/>
<dbReference type="Proteomes" id="UP000000670">
    <property type="component" value="Segment"/>
</dbReference>
<dbReference type="GO" id="GO:0044162">
    <property type="term" value="C:host cell cytoplasmic vesicle membrane"/>
    <property type="evidence" value="ECO:0007669"/>
    <property type="project" value="UniProtKB-SubCell"/>
</dbReference>
<dbReference type="GO" id="GO:0044196">
    <property type="term" value="C:host cell nucleolus"/>
    <property type="evidence" value="ECO:0007669"/>
    <property type="project" value="UniProtKB-SubCell"/>
</dbReference>
<dbReference type="GO" id="GO:0016020">
    <property type="term" value="C:membrane"/>
    <property type="evidence" value="ECO:0007669"/>
    <property type="project" value="UniProtKB-KW"/>
</dbReference>
<dbReference type="GO" id="GO:0039618">
    <property type="term" value="C:T=pseudo3 icosahedral viral capsid"/>
    <property type="evidence" value="ECO:0007669"/>
    <property type="project" value="UniProtKB-KW"/>
</dbReference>
<dbReference type="GO" id="GO:0005524">
    <property type="term" value="F:ATP binding"/>
    <property type="evidence" value="ECO:0007669"/>
    <property type="project" value="UniProtKB-KW"/>
</dbReference>
<dbReference type="GO" id="GO:0015267">
    <property type="term" value="F:channel activity"/>
    <property type="evidence" value="ECO:0007669"/>
    <property type="project" value="UniProtKB-KW"/>
</dbReference>
<dbReference type="GO" id="GO:0004197">
    <property type="term" value="F:cysteine-type endopeptidase activity"/>
    <property type="evidence" value="ECO:0007669"/>
    <property type="project" value="UniProtKB-EC"/>
</dbReference>
<dbReference type="GO" id="GO:0046872">
    <property type="term" value="F:metal ion binding"/>
    <property type="evidence" value="ECO:0007669"/>
    <property type="project" value="UniProtKB-KW"/>
</dbReference>
<dbReference type="GO" id="GO:0017111">
    <property type="term" value="F:ribonucleoside triphosphate phosphatase activity"/>
    <property type="evidence" value="ECO:0007669"/>
    <property type="project" value="UniProtKB-EC"/>
</dbReference>
<dbReference type="GO" id="GO:0003723">
    <property type="term" value="F:RNA binding"/>
    <property type="evidence" value="ECO:0007669"/>
    <property type="project" value="UniProtKB-KW"/>
</dbReference>
<dbReference type="GO" id="GO:0003724">
    <property type="term" value="F:RNA helicase activity"/>
    <property type="evidence" value="ECO:0007669"/>
    <property type="project" value="InterPro"/>
</dbReference>
<dbReference type="GO" id="GO:0003968">
    <property type="term" value="F:RNA-directed RNA polymerase activity"/>
    <property type="evidence" value="ECO:0007669"/>
    <property type="project" value="UniProtKB-KW"/>
</dbReference>
<dbReference type="GO" id="GO:0005198">
    <property type="term" value="F:structural molecule activity"/>
    <property type="evidence" value="ECO:0007669"/>
    <property type="project" value="InterPro"/>
</dbReference>
<dbReference type="GO" id="GO:0006351">
    <property type="term" value="P:DNA-templated transcription"/>
    <property type="evidence" value="ECO:0007669"/>
    <property type="project" value="InterPro"/>
</dbReference>
<dbReference type="GO" id="GO:0034220">
    <property type="term" value="P:monoatomic ion transmembrane transport"/>
    <property type="evidence" value="ECO:0007669"/>
    <property type="project" value="UniProtKB-KW"/>
</dbReference>
<dbReference type="GO" id="GO:0006508">
    <property type="term" value="P:proteolysis"/>
    <property type="evidence" value="ECO:0007669"/>
    <property type="project" value="UniProtKB-KW"/>
</dbReference>
<dbReference type="GO" id="GO:0046718">
    <property type="term" value="P:symbiont entry into host cell"/>
    <property type="evidence" value="ECO:0007669"/>
    <property type="project" value="UniProtKB-KW"/>
</dbReference>
<dbReference type="GO" id="GO:0039520">
    <property type="term" value="P:symbiont-mediated activation of host autophagy"/>
    <property type="evidence" value="ECO:0000250"/>
    <property type="project" value="UniProtKB"/>
</dbReference>
<dbReference type="GO" id="GO:0039694">
    <property type="term" value="P:viral RNA genome replication"/>
    <property type="evidence" value="ECO:0007669"/>
    <property type="project" value="InterPro"/>
</dbReference>
<dbReference type="GO" id="GO:0019062">
    <property type="term" value="P:virion attachment to host cell"/>
    <property type="evidence" value="ECO:0007669"/>
    <property type="project" value="UniProtKB-KW"/>
</dbReference>
<dbReference type="CDD" id="cd00205">
    <property type="entry name" value="rhv_like"/>
    <property type="match status" value="2"/>
</dbReference>
<dbReference type="FunFam" id="3.30.70.270:FF:000092">
    <property type="entry name" value="Genome polyprotein"/>
    <property type="match status" value="1"/>
</dbReference>
<dbReference type="Gene3D" id="2.60.120.20">
    <property type="match status" value="3"/>
</dbReference>
<dbReference type="Gene3D" id="3.30.70.270">
    <property type="match status" value="1"/>
</dbReference>
<dbReference type="Gene3D" id="3.40.50.300">
    <property type="entry name" value="P-loop containing nucleotide triphosphate hydrolases"/>
    <property type="match status" value="1"/>
</dbReference>
<dbReference type="Gene3D" id="2.40.10.10">
    <property type="entry name" value="Trypsin-like serine proteases"/>
    <property type="match status" value="1"/>
</dbReference>
<dbReference type="InterPro" id="IPR043502">
    <property type="entry name" value="DNA/RNA_pol_sf"/>
</dbReference>
<dbReference type="InterPro" id="IPR004004">
    <property type="entry name" value="Helic/Pol/Pept_Calicivir-typ"/>
</dbReference>
<dbReference type="InterPro" id="IPR000605">
    <property type="entry name" value="Helicase_SF3_ssDNA/RNA_vir"/>
</dbReference>
<dbReference type="InterPro" id="IPR014759">
    <property type="entry name" value="Helicase_SF3_ssRNA_vir"/>
</dbReference>
<dbReference type="InterPro" id="IPR007053">
    <property type="entry name" value="LRAT_dom"/>
</dbReference>
<dbReference type="InterPro" id="IPR027417">
    <property type="entry name" value="P-loop_NTPase"/>
</dbReference>
<dbReference type="InterPro" id="IPR044067">
    <property type="entry name" value="PCV_3C_PRO"/>
</dbReference>
<dbReference type="InterPro" id="IPR000199">
    <property type="entry name" value="Peptidase_C3A/C3B_picornavir"/>
</dbReference>
<dbReference type="InterPro" id="IPR009003">
    <property type="entry name" value="Peptidase_S1_PA"/>
</dbReference>
<dbReference type="InterPro" id="IPR043504">
    <property type="entry name" value="Peptidase_S1_PA_chymotrypsin"/>
</dbReference>
<dbReference type="InterPro" id="IPR001676">
    <property type="entry name" value="Picornavirus_capsid"/>
</dbReference>
<dbReference type="InterPro" id="IPR043128">
    <property type="entry name" value="Rev_trsase/Diguanyl_cyclase"/>
</dbReference>
<dbReference type="InterPro" id="IPR033703">
    <property type="entry name" value="Rhv-like"/>
</dbReference>
<dbReference type="InterPro" id="IPR001205">
    <property type="entry name" value="RNA-dir_pol_C"/>
</dbReference>
<dbReference type="InterPro" id="IPR007094">
    <property type="entry name" value="RNA-dir_pol_PSvirus"/>
</dbReference>
<dbReference type="InterPro" id="IPR029053">
    <property type="entry name" value="Viral_coat"/>
</dbReference>
<dbReference type="InterPro" id="IPR009419">
    <property type="entry name" value="VPP_parechovir_P3A"/>
</dbReference>
<dbReference type="InterPro" id="IPR009407">
    <property type="entry name" value="VPP_parechovir_P3B"/>
</dbReference>
<dbReference type="Pfam" id="PF06344">
    <property type="entry name" value="Parecho_VpG"/>
    <property type="match status" value="1"/>
</dbReference>
<dbReference type="Pfam" id="PF00548">
    <property type="entry name" value="Peptidase_C3"/>
    <property type="match status" value="1"/>
</dbReference>
<dbReference type="Pfam" id="PF06363">
    <property type="entry name" value="Picorna_P3A"/>
    <property type="match status" value="1"/>
</dbReference>
<dbReference type="Pfam" id="PF00680">
    <property type="entry name" value="RdRP_1"/>
    <property type="match status" value="1"/>
</dbReference>
<dbReference type="Pfam" id="PF00073">
    <property type="entry name" value="Rhv"/>
    <property type="match status" value="1"/>
</dbReference>
<dbReference type="Pfam" id="PF00910">
    <property type="entry name" value="RNA_helicase"/>
    <property type="match status" value="1"/>
</dbReference>
<dbReference type="PRINTS" id="PR00918">
    <property type="entry name" value="CALICVIRUSNS"/>
</dbReference>
<dbReference type="SUPFAM" id="SSF56672">
    <property type="entry name" value="DNA/RNA polymerases"/>
    <property type="match status" value="1"/>
</dbReference>
<dbReference type="SUPFAM" id="SSF52540">
    <property type="entry name" value="P-loop containing nucleoside triphosphate hydrolases"/>
    <property type="match status" value="1"/>
</dbReference>
<dbReference type="SUPFAM" id="SSF88633">
    <property type="entry name" value="Positive stranded ssRNA viruses"/>
    <property type="match status" value="3"/>
</dbReference>
<dbReference type="SUPFAM" id="SSF50494">
    <property type="entry name" value="Trypsin-like serine proteases"/>
    <property type="match status" value="1"/>
</dbReference>
<dbReference type="PROSITE" id="PS51934">
    <property type="entry name" value="LRAT"/>
    <property type="match status" value="1"/>
</dbReference>
<dbReference type="PROSITE" id="PS51874">
    <property type="entry name" value="PCV_3C_PRO"/>
    <property type="match status" value="1"/>
</dbReference>
<dbReference type="PROSITE" id="PS50507">
    <property type="entry name" value="RDRP_SSRNA_POS"/>
    <property type="match status" value="1"/>
</dbReference>
<dbReference type="PROSITE" id="PS51218">
    <property type="entry name" value="SF3_HELICASE_2"/>
    <property type="match status" value="1"/>
</dbReference>
<comment type="function">
    <molecule>Capsid protein VP0</molecule>
    <text evidence="6 7">Forms an icosahedral capsid of pseudo T=3 symmetry together with capsid proteins VP1 and VP3 (By similarity). The capsid is 300 Angstroms in diameter, composed of 60 copies of each capsid protein and enclosing the viral positive strand RNA genome (By similarity). Capsid proteins interact with host alpha-V/beta-3 integrin heterodimer to provide virion attachment target cell (By similarity). This attachment induces virion internalization predominantly through clathrin-mediated endocytosis (By similarity). Binds packaging signals present in the viral RNA (By similarity).</text>
</comment>
<comment type="function">
    <molecule>Capsid protein VP3</molecule>
    <text evidence="6 7">Forms an icosahedral capsid of pseudo T=3 symmetry together with capsid proteins VP0 and VP1 (By similarity). The capsid is 300 Angstroms in diameter, composed of 60 copies of each capsid protein and enclosing the viral positive strand RNA genome (By similarity). Capsid proteins interact with host alpha-V/beta-3 integrin heterodimer to provide virion attachment target cell (By similarity). This attachment induces virion internalization predominantly through clathrin-mediated endocytosis (By similarity). Binds packaging signals present in the viral RNA (By similarity).</text>
</comment>
<comment type="function">
    <molecule>Capsid protein VP1</molecule>
    <text evidence="6 7">Forms an icosahedral capsid of pseudo T=3 symmetry together with capsid proteins VP0 and VP3 (By similarity). The capsid is 300 Angstroms in diameter, composed of 60 copies of each capsid protein and enclosing the viral positive strand RNA genome (By similarity). Capsid proteins interact with host alpha-V/beta-3 integrin heterodimer to provide virion attachment target cell (By similarity). This attachment induces virion internalization predominantly through clathrin-mediated endocytosis (By similarity). Binds packaging signals present in the viral RNA (By similarity).</text>
</comment>
<comment type="function">
    <molecule>Protein 2A H-NC</molecule>
    <text evidence="14">Is not a protease.</text>
</comment>
<comment type="function">
    <molecule>Protein 2B</molecule>
    <text evidence="2">Plays an essential role in the virus replication cycle by acting as a viroporin. Creates a pore in the host endoplasmic reticulum and as a consequence releases Ca2+ in the cytoplasm of infected cell. In turn, high levels of cytoplasmic calcium may trigger membrane trafficking and transport of viral ER-associated proteins to viroplasms, sites of viral genome replication.</text>
</comment>
<comment type="function">
    <molecule>Protein 2C</molecule>
    <text evidence="2">Induces and associates with structural rearrangements of intracellular membranes. Displays RNA-binding, nucleotide binding and NTPase activities. May play a role in virion morphogenesis and viral RNA encapsidation by interacting with the capsid protein VP3.</text>
</comment>
<comment type="function">
    <molecule>Protein 3A</molecule>
    <text evidence="2 8">Localizes the viral replication complex to the surface of membranous vesicles (By similarity). It inhibits host cell endoplasmic reticulum-to-Golgi apparatus transport and causes the disassembly of the Golgi complex, possibly through GBF1 interaction (By similarity). This would result in depletion of MHC, trail receptors and IFN receptors at the host cell surface (By similarity). Plays an essential role in viral RNA replication by recruiting ACBD3 and PI4KB at the viral replication sites, thereby allowing the formation of the rearranged membranous structures where viral replication takes place (By similarity).</text>
</comment>
<comment type="function">
    <molecule>Viral protein genome-linked</molecule>
    <text evidence="2">Acts as a primer for viral RNA replication and remains covalently bound to viral genomic RNA. VPg is uridylylated prior to priming replication into VPg-pUpU. The VPg-pUpU is then used as primer on the genomic RNA poly(A) by the RNA-dependent RNA polymerase to replicate the viral genome. Following genome release from the infecting virion in the cytoplasm, the VPg-RNA linkage is probably removed by host TDP2. During the late stage of the replication cycle, host TDP2 is excluded from sites of viral RNA synthesis and encapsidation, allowing for the generation of progeny virions.</text>
</comment>
<comment type="function">
    <molecule>Protease 3C</molecule>
    <text evidence="3 4">Cysteine protease that generates mature viral proteins from the precursor polyprotein (By similarity). In addition to its proteolytic activity, it binds to viral RNA, and thus influences viral genome replication. RNA and substrate bind cooperatively to the protease (By similarity).</text>
</comment>
<comment type="function">
    <molecule>RNA-directed RNA polymerase 3D-POL</molecule>
    <text evidence="2">Replicates the viral genomic RNA on the surface of intracellular membranes. Covalently attaches UMP to a tyrosine of VPg, which is used to prime RNA synthesis. The positive stranded RNA genome is first replicated at virus induced membranous vesicles, creating a dsRNA genomic replication form. This dsRNA is then used as template to synthesize positive stranded RNA genomes. ss(+)RNA genomes are either translated, replicated or encapsidated.</text>
</comment>
<comment type="catalytic activity">
    <molecule>RNA-directed RNA polymerase 3D-POL</molecule>
    <reaction evidence="10">
        <text>RNA(n) + a ribonucleoside 5'-triphosphate = RNA(n+1) + diphosphate</text>
        <dbReference type="Rhea" id="RHEA:21248"/>
        <dbReference type="Rhea" id="RHEA-COMP:14527"/>
        <dbReference type="Rhea" id="RHEA-COMP:17342"/>
        <dbReference type="ChEBI" id="CHEBI:33019"/>
        <dbReference type="ChEBI" id="CHEBI:61557"/>
        <dbReference type="ChEBI" id="CHEBI:140395"/>
        <dbReference type="EC" id="2.7.7.48"/>
    </reaction>
</comment>
<comment type="catalytic activity">
    <molecule>Protein 2C</molecule>
    <reaction evidence="2">
        <text>a ribonucleoside 5'-triphosphate + H2O = a ribonucleoside 5'-diphosphate + phosphate + H(+)</text>
        <dbReference type="Rhea" id="RHEA:23680"/>
        <dbReference type="ChEBI" id="CHEBI:15377"/>
        <dbReference type="ChEBI" id="CHEBI:15378"/>
        <dbReference type="ChEBI" id="CHEBI:43474"/>
        <dbReference type="ChEBI" id="CHEBI:57930"/>
        <dbReference type="ChEBI" id="CHEBI:61557"/>
        <dbReference type="EC" id="3.6.1.15"/>
    </reaction>
</comment>
<comment type="catalytic activity">
    <molecule>Protease 3C</molecule>
    <reaction evidence="12">
        <text>Selective cleavage of Gln-|-Gly bond in the poliovirus polyprotein. In other picornavirus reactions Glu may be substituted for Gln, and Ser or Thr for Gly.</text>
        <dbReference type="EC" id="3.4.22.28"/>
    </reaction>
</comment>
<comment type="cofactor">
    <molecule>RNA-directed RNA polymerase 3D-POL</molecule>
    <cofactor evidence="2">
        <name>Mg(2+)</name>
        <dbReference type="ChEBI" id="CHEBI:18420"/>
    </cofactor>
    <text evidence="2">Binds 2 magnesium ions that constitute a dinuclear catalytic metal center. The magnesium ions are not prebound but only present for catalysis.</text>
</comment>
<comment type="subunit">
    <molecule>Capsid protein VP0</molecule>
    <text evidence="2">Interacts with capsid protein VP1 and capsid protein VP3 to form heterotrimeric protomers. Five protomers subsequently associate to form pentamers which serve as building blocks for the capsid.</text>
</comment>
<comment type="subunit">
    <molecule>Capsid protein VP1</molecule>
    <text evidence="2">Interacts with capsid protein VP0, and capsid protein VP3 to form heterotrimeric protomers. Five protomers subsequently associate to form pentamers which serve as building blocks for the capsid.</text>
</comment>
<comment type="subunit">
    <molecule>Capsid protein VP3</molecule>
    <text evidence="2">Interacts with capsid protein VP0 and capsid protein VP1 to form heterotrimeric protomers. Five protomers subsequently associate to form pentamers which serve as building blocks for the capsid.</text>
</comment>
<comment type="subunit">
    <molecule>Protein 2C</molecule>
    <text evidence="2">Homohexamer; forms a hexameric ring structure with 6-fold symmetry characteristic of AAA+ ATPases.</text>
</comment>
<comment type="subunit">
    <molecule>Protein 3A</molecule>
    <text evidence="2 6">Homodimer (By similarity). Interacts with host ACBD3 (By similarity).</text>
</comment>
<comment type="subunit">
    <molecule>Viral protein genome-linked</molecule>
    <text evidence="2">Interacts with RNA-directed RNA polymerase.</text>
</comment>
<comment type="subunit">
    <molecule>RNA-directed RNA polymerase 3D-POL</molecule>
    <text evidence="2">Interacts with Viral protein genome-linked.</text>
</comment>
<comment type="subcellular location">
    <molecule>Capsid protein VP3</molecule>
    <subcellularLocation>
        <location evidence="15">Virion</location>
    </subcellularLocation>
    <subcellularLocation>
        <location evidence="15">Host cytoplasm</location>
    </subcellularLocation>
</comment>
<comment type="subcellular location">
    <molecule>Capsid protein VP1</molecule>
    <subcellularLocation>
        <location evidence="6">Virion</location>
    </subcellularLocation>
    <subcellularLocation>
        <location evidence="15">Host cytoplasm</location>
    </subcellularLocation>
</comment>
<comment type="subcellular location">
    <molecule>Protein 2A H-NC</molecule>
    <subcellularLocation>
        <location evidence="6">Host cytoplasm</location>
    </subcellularLocation>
    <subcellularLocation>
        <location evidence="6">Host nucleus</location>
        <location evidence="6">Host nucleolus</location>
    </subcellularLocation>
</comment>
<comment type="subcellular location">
    <molecule>Protein 2B</molecule>
    <subcellularLocation>
        <location evidence="6">Host cytoplasmic vesicle membrane</location>
        <topology evidence="6">Peripheral membrane protein</topology>
        <orientation evidence="6">Cytoplasmic side</orientation>
    </subcellularLocation>
    <text evidence="6">Probably localizes to the surface of intracellular membrane vesicles that are induced after virus infection as the site for viral RNA replication. These vesicles are derived from the endoplasmic reticulum.</text>
</comment>
<comment type="subcellular location">
    <molecule>Protein 2C</molecule>
    <subcellularLocation>
        <location evidence="6">Host cytoplasmic vesicle membrane</location>
        <topology evidence="6">Peripheral membrane protein</topology>
        <orientation evidence="6">Cytoplasmic side</orientation>
    </subcellularLocation>
    <text evidence="6">Probably localizes to the surface of intracellular membrane vesicles that are induced after virus infection as the site for viral RNA replication. These vesicles are derived from the endoplasmic reticulum.</text>
</comment>
<comment type="subcellular location">
    <molecule>Protein 3A</molecule>
    <subcellularLocation>
        <location evidence="6">Host cytoplasmic vesicle membrane</location>
        <topology evidence="6">Peripheral membrane protein</topology>
        <orientation evidence="6">Cytoplasmic side</orientation>
    </subcellularLocation>
    <text evidence="6">Probably localizes to the surface of intracellular membrane vesicles that are induced after virus infection as the site for viral RNA replication. These vesicles are derived from the endoplasmic reticulum.</text>
</comment>
<comment type="subcellular location">
    <molecule>Viral protein genome-linked</molecule>
    <subcellularLocation>
        <location evidence="15">Virion</location>
    </subcellularLocation>
</comment>
<comment type="subcellular location">
    <molecule>Protease 3C</molecule>
    <subcellularLocation>
        <location evidence="15">Host cytoplasm</location>
    </subcellularLocation>
</comment>
<comment type="subcellular location">
    <molecule>RNA-directed RNA polymerase 3D-POL</molecule>
    <subcellularLocation>
        <location evidence="15">Host cytoplasmic vesicle membrane</location>
        <topology evidence="15">Peripheral membrane protein</topology>
        <orientation evidence="15">Cytoplasmic side</orientation>
    </subcellularLocation>
    <text evidence="1">Probably localizes to the surface of intracellular membrane vesicles that are induced after virus infection as the site for viral RNA replication. These vesicles are derived from the endoplasmic reticulum (By similarity).</text>
</comment>
<comment type="domain">
    <molecule>Capsid protein VP0</molecule>
    <text evidence="6">The N-terminus mediates the interactions among pentamers (By similarity). In order to facilitate delivery of the virus genome into the cytoplasm, the N-termini of VP0s have to be released from contacts between pentamers and exposed at the particle surface, resulting in capsid disruption (By similarity).</text>
</comment>
<comment type="domain">
    <molecule>Capsid protein VP3</molecule>
    <text evidence="7">The N-terminus binds RNA.</text>
</comment>
<comment type="domain">
    <molecule>Protein 2A H-NC</molecule>
    <text evidence="14">Contains a H-NC box.</text>
</comment>
<comment type="PTM">
    <text evidence="1">VPg is uridylylated by the polymerase and is covalently linked to the 5'-end of genomic RNA. This uridylylated form acts as a nucleotide-peptide primer for the polymerase (By similarity).</text>
</comment>
<comment type="PTM">
    <text evidence="7">Specific enzymatic cleavages yield mature proteins (By similarity). All cleavages are catalyzed by P3C (By similarity).</text>
</comment>
<comment type="similarity">
    <text evidence="15">Belongs to the picornaviruses polyprotein family.</text>
</comment>
<organism>
    <name type="scientific">Human parechovirus 2 (strain Williamson)</name>
    <name type="common">HPeV-2</name>
    <name type="synonym">Echovirus 23</name>
    <dbReference type="NCBI Taxonomy" id="122962"/>
    <lineage>
        <taxon>Viruses</taxon>
        <taxon>Riboviria</taxon>
        <taxon>Orthornavirae</taxon>
        <taxon>Pisuviricota</taxon>
        <taxon>Pisoniviricetes</taxon>
        <taxon>Picornavirales</taxon>
        <taxon>Picornaviridae</taxon>
        <taxon>Paavivirinae</taxon>
        <taxon>Parechovirus</taxon>
        <taxon>Parechovirus A</taxon>
    </lineage>
</organism>
<evidence type="ECO:0000250" key="1"/>
<evidence type="ECO:0000250" key="2">
    <source>
        <dbReference type="UniProtKB" id="P03300"/>
    </source>
</evidence>
<evidence type="ECO:0000250" key="3">
    <source>
        <dbReference type="UniProtKB" id="P03304"/>
    </source>
</evidence>
<evidence type="ECO:0000250" key="4">
    <source>
        <dbReference type="UniProtKB" id="P12296"/>
    </source>
</evidence>
<evidence type="ECO:0000250" key="5">
    <source>
        <dbReference type="UniProtKB" id="P53816"/>
    </source>
</evidence>
<evidence type="ECO:0000250" key="6">
    <source>
        <dbReference type="UniProtKB" id="Q66578"/>
    </source>
</evidence>
<evidence type="ECO:0000250" key="7">
    <source>
        <dbReference type="UniProtKB" id="Q8JV21"/>
    </source>
</evidence>
<evidence type="ECO:0000250" key="8">
    <source>
        <dbReference type="UniProtKB" id="Q9YLG5"/>
    </source>
</evidence>
<evidence type="ECO:0000255" key="9"/>
<evidence type="ECO:0000255" key="10">
    <source>
        <dbReference type="PROSITE-ProRule" id="PRU00539"/>
    </source>
</evidence>
<evidence type="ECO:0000255" key="11">
    <source>
        <dbReference type="PROSITE-ProRule" id="PRU00551"/>
    </source>
</evidence>
<evidence type="ECO:0000255" key="12">
    <source>
        <dbReference type="PROSITE-ProRule" id="PRU01222"/>
    </source>
</evidence>
<evidence type="ECO:0000255" key="13">
    <source>
        <dbReference type="PROSITE-ProRule" id="PRU01283"/>
    </source>
</evidence>
<evidence type="ECO:0000303" key="14">
    <source>
    </source>
</evidence>
<evidence type="ECO:0000305" key="15"/>
<sequence length="2179" mass="245874">METIKSIADMATGVTKTIDATINSVNEIITNTDNASGGDILTKVADDASNILGPNCYATTSEPENKDVVQATTTVNTTNLTQHPSAPTLPFTPDFSNVDTFHSMAYDTTTGSKNPNKLVRLTTHAWASTLQRGHQIDHVNLPVDFWDEQRKPAYGHAKYFAAVRCGFHFQVQVNVNQGTAGSALVVYEPKPVVDYDKDLEFGAFTNLPHVLMNLAETTQADLCIPYVADTNYVKTDSSDLGQLKVYVWTPLSIPSGSSNQVDVTILGSLLQLDFQNPRVYGQNVDIYDTAPSKPIPLRKTKYLTMSTKYKWTRNKVDIAEGPGSMNMANVLSTTAAQSVALVGERAFYDPRTAGSKSRFDDLVKISQLFSVMADSTTPSANHGIDQKGYFKWSANSDPQAIVHRNLVHLNLFPNLKVFENSYSYFRGSLIIRLSVYASTFNRGRLNGFFPNSSTDETSEIDNAIYTICDIGSDNSFEITIPYSFSTWMRKTHGKPIGLFQIEVLNRLTYNYSSPNEVYCIVQGKMGQDAKFFCPTGSLVTFQNSWGSQMDLTDPLCIEDSVEDCKQTITPTELGLTSAQDDGPLGNDKPNYFLNFKSMNVDIFTVSHTKVDNIFGRAWFAHVHDFTNDGLWRQGLEFPKEGHGALSLLFAYFTGELNIHVLFLSDRGFLRVGHTYDTETNRTNFLSSSGIITVPAGEQMTLSVPSYSNKPLRTVRSSNALGYLLCKPLLTGTSSGRIEIFLSLRCPNFFFPLPAPKPATRKYRGDLATWSDQSPYGRQGKKQLMKLAYLDRGFYKHYGIVVGDDVYQLDSDDIFKTALTGKAKFTKTRLTPDWVVEEECELDYFRIKYLESSVNSEHIFSVDNNCETIAKDIFGSHSLSQHQQIGLIGTILLTAGLMSTIKTPVNPTTIKEFFNHAIEGDEQGLSLLVQKCTTFFSSAATELLDNDLVKFIIKILVRILCYMVLYCHKPNILTTACLSTLLVMDVTSSSVLSPSCKALMQCLMDGDVKKLAEVVAESMSNTDDDEIKEQICDTVKYTKQILSNQGPFKGFNEISTAFRHIDWWIQTLLKIKDMVLSVFKPSVEKRAVEWLERNKEHVCSILDYASDIIVKSKDQTKMKTQEFYQRYNDCLSKFKPIMAMCFRSCHNSISNTVYRLFQELARIPNRMATQNDLIRVEPIGIWIQGEPGQGKSFLTHTLSKQLQKTCGLQGIYTNPTASEFMDGYDNQDIHLIDDLGQTRKERDIEMLCNCISSDPDIVPMAHLEEKGKFYTSKLVIATTNKPDFSSTVLLDSGALRRRFPYIMHIRAAKHYSKSGKLNVSQAMPHMSTGECWEVSKNGRDWETLKLKELIDKITVDYKERIANYNTWKKQLEDQTLDDLDDAVSYIKHNYPDAIPYIDEYLNIEMSTLIEQMEAFIEPKPSVFKCFASRVGDKIKEASREVVKWFSDKLKSMLNFVERNKAWLTVVSAVTSAIGILLLVTKIFKKEESKDERAYNPTLPVAKPKGTFPVSQREFKNEAPYDGQLEHIISQMAYITGSTTGHITHCAGYQHDEIILHGHSIKYLEQEEELTLHYKNKVFPIEQPSVTQVTLGGKPMDLAIVKCKLPFRFKKNSKYYTNKIGTESMLIWMTEQGIITKEVQRVHHSGGIKTREGTESTKTISYTVKSCKGMCGGLLISKVEGNFKILGMHIAGNGEMGVAIPFNFLKNDMSDQGIVTEVTPIQPMYINTKSQIHKSPVYGAVEVKMGPAVLSKSDTRLEEPVDCLVKKSASKYRVNKFQVNNELWQGVKACVKSKFREIFGVNGIVDMKTAILGTSHVNSMDLSTSAGYSFVKSGYKKKDLICLEPFSVSPMLEKLVQEKFHNLLKGNQITTIFNTCLKDELRKLDKIATGKTRCIEACEIDYCIVYRMIMMEIYDKIYQTPCYYSGLAVGINPYRDWHFMINALNDYNYEMDYSQYDGSLSSMLLWEAVQVLAYCHDSPDLVMQLHKPVIDSDHVVFNERWLIHGGMPSGSPCTTVLNSLCNLMMCIYTTNLISPGIDCLPIVYGDDVILSLDKEIEPERLQSIMAESFGAEVTGSRKDEPPSLKPRMEVEFLKRKPGYFPESTFIVGKLDTENMIQHLMWMKNFSTFKQQLQSYLMELCLHGKDTYQHYVKILNPYLKEWNIPVDDYEVVIGKLVPMVFD</sequence>
<accession>O73556</accession>
<organismHost>
    <name type="scientific">Homo sapiens</name>
    <name type="common">Human</name>
    <dbReference type="NCBI Taxonomy" id="9606"/>
</organismHost>